<feature type="chain" id="PRO_0000215993" description="Chalcone synthase B">
    <location>
        <begin position="1"/>
        <end position="396"/>
    </location>
</feature>
<feature type="active site" evidence="1">
    <location>
        <position position="170"/>
    </location>
</feature>
<keyword id="KW-0012">Acyltransferase</keyword>
<keyword id="KW-0284">Flavonoid biosynthesis</keyword>
<keyword id="KW-0808">Transferase</keyword>
<evidence type="ECO:0000255" key="1">
    <source>
        <dbReference type="PROSITE-ProRule" id="PRU10023"/>
    </source>
</evidence>
<evidence type="ECO:0000305" key="2"/>
<protein>
    <recommendedName>
        <fullName>Chalcone synthase B</fullName>
        <ecNumber>2.3.1.74</ecNumber>
    </recommendedName>
    <alternativeName>
        <fullName>Naringenin-chalcone synthase B</fullName>
        <shortName>CHS-B</shortName>
    </alternativeName>
</protein>
<dbReference type="EC" id="2.3.1.74"/>
<dbReference type="EMBL" id="U15947">
    <property type="protein sequence ID" value="AAC49030.1"/>
    <property type="molecule type" value="Genomic_DNA"/>
</dbReference>
<dbReference type="PIR" id="T10951">
    <property type="entry name" value="T10951"/>
</dbReference>
<dbReference type="SMR" id="P48398"/>
<dbReference type="UniPathway" id="UPA00154"/>
<dbReference type="GO" id="GO:0016210">
    <property type="term" value="F:naringenin-chalcone synthase activity"/>
    <property type="evidence" value="ECO:0007669"/>
    <property type="project" value="UniProtKB-EC"/>
</dbReference>
<dbReference type="GO" id="GO:0009813">
    <property type="term" value="P:flavonoid biosynthetic process"/>
    <property type="evidence" value="ECO:0007669"/>
    <property type="project" value="UniProtKB-UniPathway"/>
</dbReference>
<dbReference type="GO" id="GO:0030639">
    <property type="term" value="P:polyketide biosynthetic process"/>
    <property type="evidence" value="ECO:0007669"/>
    <property type="project" value="TreeGrafter"/>
</dbReference>
<dbReference type="CDD" id="cd00831">
    <property type="entry name" value="CHS_like"/>
    <property type="match status" value="1"/>
</dbReference>
<dbReference type="FunFam" id="3.40.47.10:FF:000014">
    <property type="entry name" value="Chalcone synthase 1"/>
    <property type="match status" value="1"/>
</dbReference>
<dbReference type="FunFam" id="3.40.47.10:FF:000025">
    <property type="entry name" value="Chalcone synthase 2"/>
    <property type="match status" value="1"/>
</dbReference>
<dbReference type="Gene3D" id="3.40.47.10">
    <property type="match status" value="2"/>
</dbReference>
<dbReference type="InterPro" id="IPR012328">
    <property type="entry name" value="Chalcone/stilbene_synt_C"/>
</dbReference>
<dbReference type="InterPro" id="IPR001099">
    <property type="entry name" value="Chalcone/stilbene_synt_N"/>
</dbReference>
<dbReference type="InterPro" id="IPR018088">
    <property type="entry name" value="Chalcone/stilbene_synthase_AS"/>
</dbReference>
<dbReference type="InterPro" id="IPR011141">
    <property type="entry name" value="Polyketide_synthase_type-III"/>
</dbReference>
<dbReference type="InterPro" id="IPR016039">
    <property type="entry name" value="Thiolase-like"/>
</dbReference>
<dbReference type="PANTHER" id="PTHR11877:SF104">
    <property type="entry name" value="CHALCONE SYNTHASE"/>
    <property type="match status" value="1"/>
</dbReference>
<dbReference type="PANTHER" id="PTHR11877">
    <property type="entry name" value="HYDROXYMETHYLGLUTARYL-COA SYNTHASE"/>
    <property type="match status" value="1"/>
</dbReference>
<dbReference type="Pfam" id="PF02797">
    <property type="entry name" value="Chal_sti_synt_C"/>
    <property type="match status" value="1"/>
</dbReference>
<dbReference type="Pfam" id="PF00195">
    <property type="entry name" value="Chal_sti_synt_N"/>
    <property type="match status" value="1"/>
</dbReference>
<dbReference type="PIRSF" id="PIRSF000451">
    <property type="entry name" value="PKS_III"/>
    <property type="match status" value="1"/>
</dbReference>
<dbReference type="SUPFAM" id="SSF53901">
    <property type="entry name" value="Thiolase-like"/>
    <property type="match status" value="2"/>
</dbReference>
<dbReference type="PROSITE" id="PS00441">
    <property type="entry name" value="CHALCONE_SYNTH"/>
    <property type="match status" value="1"/>
</dbReference>
<gene>
    <name type="primary">CHSB</name>
</gene>
<proteinExistence type="inferred from homology"/>
<comment type="function">
    <text>The primary product of this enzyme is 4,2',4',6'-tetrahydroxychalcone (also termed naringenin-chalcone or chalcone) which can under specific conditions spontaneously isomerize into naringenin.</text>
</comment>
<comment type="catalytic activity">
    <reaction evidence="1">
        <text>(E)-4-coumaroyl-CoA + 3 malonyl-CoA + 3 H(+) = 2',4,4',6'-tetrahydroxychalcone + 3 CO2 + 4 CoA</text>
        <dbReference type="Rhea" id="RHEA:11128"/>
        <dbReference type="ChEBI" id="CHEBI:15378"/>
        <dbReference type="ChEBI" id="CHEBI:15413"/>
        <dbReference type="ChEBI" id="CHEBI:16526"/>
        <dbReference type="ChEBI" id="CHEBI:57287"/>
        <dbReference type="ChEBI" id="CHEBI:57384"/>
        <dbReference type="ChEBI" id="CHEBI:85008"/>
        <dbReference type="EC" id="2.3.1.74"/>
    </reaction>
</comment>
<comment type="pathway">
    <text>Secondary metabolite biosynthesis; flavonoid biosynthesis.</text>
</comment>
<comment type="similarity">
    <text evidence="2">Belongs to the thiolase-like superfamily. Chalcone/stilbene synthases family.</text>
</comment>
<accession>P48398</accession>
<reference key="1">
    <citation type="journal article" date="1995" name="Proc. Natl. Acad. Sci. U.S.A.">
        <title>Evolution of the chalcone synthase gene family in the genus Ipomoea.</title>
        <authorList>
            <person name="Durbin M.L."/>
            <person name="Learn G.H."/>
            <person name="Huttley G.A."/>
            <person name="Clegg M.T."/>
        </authorList>
    </citation>
    <scope>NUCLEOTIDE SEQUENCE [GENOMIC DNA]</scope>
</reference>
<sequence>MSTTVTVLTDTWSRRAKRLEGDAKILAIGTATPASWVDQTTYPDFYFRITNSQHLLEHKEKFRRICNKSKIRKRHLVLTEELLKKNPNLCTYNETSLNTRQDILVSEVPKLGKEAAMKAIKEWGRPISEITHLVFCTTSGVDMPGADFQLTKLLGLNSSVKRLMMYQQGCNAGAAMLRLAKDLAESNKGGRVLVVCAEITINIFRGPSLEQDDNLLAQCLFGDGAAAMIVAADPRPGLETPLFELVSSAQTIVPNTDSHLKLHLREMGLTFHCSKAVPSVLAENVEDCLVKAFEPYGISDWNSIFWVFHPGGNAIVDRVEERLGLGPEKLRASRDVLSEYGNLTSACVLFILDEMRKKSKKDEQMTTGEGLEWGVVFGFGPGLTIDTIIIRSVPIN</sequence>
<organism>
    <name type="scientific">Ipomoea purpurea</name>
    <name type="common">Common morning glory</name>
    <name type="synonym">Pharbitis purpurea</name>
    <dbReference type="NCBI Taxonomy" id="4121"/>
    <lineage>
        <taxon>Eukaryota</taxon>
        <taxon>Viridiplantae</taxon>
        <taxon>Streptophyta</taxon>
        <taxon>Embryophyta</taxon>
        <taxon>Tracheophyta</taxon>
        <taxon>Spermatophyta</taxon>
        <taxon>Magnoliopsida</taxon>
        <taxon>eudicotyledons</taxon>
        <taxon>Gunneridae</taxon>
        <taxon>Pentapetalae</taxon>
        <taxon>asterids</taxon>
        <taxon>lamiids</taxon>
        <taxon>Solanales</taxon>
        <taxon>Convolvulaceae</taxon>
        <taxon>Ipomoeeae</taxon>
        <taxon>Ipomoea</taxon>
    </lineage>
</organism>
<name>CHSB_IPOPU</name>